<protein>
    <recommendedName>
        <fullName>Cilia- and flagella-associated protein 68</fullName>
    </recommendedName>
</protein>
<gene>
    <name type="primary">CFAP68</name>
    <name type="ORF">QtsA-19889</name>
</gene>
<comment type="function">
    <text evidence="1">Microtubule inner protein (MIP) part of the dynein-decorated doublet microtubules (DMTs) in cilia axoneme, which is required for motile cilia beating.</text>
</comment>
<comment type="subunit">
    <text evidence="1">Microtubule inner protein component of sperm flagellar doublet microtubules.</text>
</comment>
<comment type="subcellular location">
    <subcellularLocation>
        <location evidence="2">Cytoplasm</location>
        <location evidence="2">Cytoskeleton</location>
        <location evidence="2">Cilium axoneme</location>
    </subcellularLocation>
    <subcellularLocation>
        <location evidence="1">Cytoplasm</location>
        <location evidence="1">Cytoskeleton</location>
        <location evidence="1">Flagellum axoneme</location>
    </subcellularLocation>
    <subcellularLocation>
        <location evidence="2">Nucleus</location>
    </subcellularLocation>
    <subcellularLocation>
        <location evidence="2">Cell projection</location>
        <location evidence="2">Cilium</location>
    </subcellularLocation>
</comment>
<comment type="similarity">
    <text evidence="3">Belongs to the CFAP68 family.</text>
</comment>
<name>CFA68_MACFA</name>
<organism>
    <name type="scientific">Macaca fascicularis</name>
    <name type="common">Crab-eating macaque</name>
    <name type="synonym">Cynomolgus monkey</name>
    <dbReference type="NCBI Taxonomy" id="9541"/>
    <lineage>
        <taxon>Eukaryota</taxon>
        <taxon>Metazoa</taxon>
        <taxon>Chordata</taxon>
        <taxon>Craniata</taxon>
        <taxon>Vertebrata</taxon>
        <taxon>Euteleostomi</taxon>
        <taxon>Mammalia</taxon>
        <taxon>Eutheria</taxon>
        <taxon>Euarchontoglires</taxon>
        <taxon>Primates</taxon>
        <taxon>Haplorrhini</taxon>
        <taxon>Catarrhini</taxon>
        <taxon>Cercopithecidae</taxon>
        <taxon>Cercopithecinae</taxon>
        <taxon>Macaca</taxon>
    </lineage>
</organism>
<dbReference type="EMBL" id="AB169412">
    <property type="protein sequence ID" value="BAE01495.1"/>
    <property type="molecule type" value="mRNA"/>
</dbReference>
<dbReference type="RefSeq" id="NP_001270127.1">
    <property type="nucleotide sequence ID" value="NM_001283198.1"/>
</dbReference>
<dbReference type="RefSeq" id="XP_045226976.1">
    <property type="nucleotide sequence ID" value="XM_045371041.2"/>
</dbReference>
<dbReference type="SMR" id="Q4R5Y0"/>
<dbReference type="STRING" id="9541.ENSMFAP00000046096"/>
<dbReference type="Ensembl" id="ENSMFAT00000020389.2">
    <property type="protein sequence ID" value="ENSMFAP00000046084.1"/>
    <property type="gene ID" value="ENSMFAG00000000736.2"/>
</dbReference>
<dbReference type="GeneID" id="101926674"/>
<dbReference type="VEuPathDB" id="HostDB:ENSMFAG00000000736"/>
<dbReference type="eggNOG" id="ENOG502S5NG">
    <property type="taxonomic scope" value="Eukaryota"/>
</dbReference>
<dbReference type="GeneTree" id="ENSGT00390000002905"/>
<dbReference type="OMA" id="QYDHYFE"/>
<dbReference type="Proteomes" id="UP000233100">
    <property type="component" value="Chromosome 14"/>
</dbReference>
<dbReference type="Bgee" id="ENSMFAG00000000736">
    <property type="expression patterns" value="Expressed in pituitary gland and 13 other cell types or tissues"/>
</dbReference>
<dbReference type="GO" id="GO:0160111">
    <property type="term" value="C:axonemal A tubule inner sheath"/>
    <property type="evidence" value="ECO:0000250"/>
    <property type="project" value="UniProtKB"/>
</dbReference>
<dbReference type="GO" id="GO:0005930">
    <property type="term" value="C:axoneme"/>
    <property type="evidence" value="ECO:0000250"/>
    <property type="project" value="UniProtKB"/>
</dbReference>
<dbReference type="GO" id="GO:0005929">
    <property type="term" value="C:cilium"/>
    <property type="evidence" value="ECO:0000250"/>
    <property type="project" value="UniProtKB"/>
</dbReference>
<dbReference type="GO" id="GO:0005634">
    <property type="term" value="C:nucleus"/>
    <property type="evidence" value="ECO:0007669"/>
    <property type="project" value="UniProtKB-SubCell"/>
</dbReference>
<dbReference type="GO" id="GO:0036126">
    <property type="term" value="C:sperm flagellum"/>
    <property type="evidence" value="ECO:0000250"/>
    <property type="project" value="UniProtKB"/>
</dbReference>
<dbReference type="GO" id="GO:0030317">
    <property type="term" value="P:flagellated sperm motility"/>
    <property type="evidence" value="ECO:0000250"/>
    <property type="project" value="UniProtKB"/>
</dbReference>
<dbReference type="InterPro" id="IPR009524">
    <property type="entry name" value="CFAP68"/>
</dbReference>
<dbReference type="InterPro" id="IPR037662">
    <property type="entry name" value="CFAP68/107"/>
</dbReference>
<dbReference type="PANTHER" id="PTHR31180">
    <property type="entry name" value="CILIA- AND FLAGELLA-ASSOCIATED PROTEIN 107-RELATED"/>
    <property type="match status" value="1"/>
</dbReference>
<dbReference type="PANTHER" id="PTHR31180:SF3">
    <property type="entry name" value="EXPRESSED SEQUENCE EH456644"/>
    <property type="match status" value="1"/>
</dbReference>
<dbReference type="Pfam" id="PF06608">
    <property type="entry name" value="CFAP68"/>
    <property type="match status" value="1"/>
</dbReference>
<accession>Q4R5Y0</accession>
<keyword id="KW-0966">Cell projection</keyword>
<keyword id="KW-0969">Cilium</keyword>
<keyword id="KW-0963">Cytoplasm</keyword>
<keyword id="KW-0206">Cytoskeleton</keyword>
<keyword id="KW-0282">Flagellum</keyword>
<keyword id="KW-0539">Nucleus</keyword>
<keyword id="KW-1185">Reference proteome</keyword>
<reference key="1">
    <citation type="submission" date="2005-06" db="EMBL/GenBank/DDBJ databases">
        <title>DNA sequences of macaque genes expressed in brain or testis and its evolutionary implications.</title>
        <authorList>
            <consortium name="International consortium for macaque cDNA sequencing and analysis"/>
        </authorList>
    </citation>
    <scope>NUCLEOTIDE SEQUENCE [LARGE SCALE MRNA]</scope>
    <source>
        <tissue>Testis</tissue>
    </source>
</reference>
<evidence type="ECO:0000250" key="1">
    <source>
        <dbReference type="UniProtKB" id="Q9D131"/>
    </source>
</evidence>
<evidence type="ECO:0000250" key="2">
    <source>
        <dbReference type="UniProtKB" id="Q9H5F2"/>
    </source>
</evidence>
<evidence type="ECO:0000305" key="3"/>
<proteinExistence type="evidence at transcript level"/>
<sequence>MAASQCLCCSKFLLQRQNLACFLTNPHCGSIINADGHGEVWTDWNNMSKFFQYGWRCTTNENAYSNRTLMGNWNQERYDLRNIVQPKPLPSQFGHYFETTYDTSYNNKMPLSTHRFKREPHCFPGHQPELDPPRYKCTEKSTYMNSYSKS</sequence>
<feature type="chain" id="PRO_0000359752" description="Cilia- and flagella-associated protein 68">
    <location>
        <begin position="1"/>
        <end position="150"/>
    </location>
</feature>
<feature type="region of interest" description="Mn 1" evidence="2">
    <location>
        <begin position="99"/>
        <end position="110"/>
    </location>
</feature>
<feature type="region of interest" description="Mn 2" evidence="2">
    <location>
        <begin position="140"/>
        <end position="150"/>
    </location>
</feature>